<comment type="function">
    <text evidence="1">Catalyzes the conversion of N-acetyl-diaminopimelate to diaminopimelate and acetate.</text>
</comment>
<comment type="catalytic activity">
    <reaction evidence="1">
        <text>N-acetyl-(2S,6S)-2,6-diaminopimelate + H2O = (2S,6S)-2,6-diaminopimelate + acetate</text>
        <dbReference type="Rhea" id="RHEA:20405"/>
        <dbReference type="ChEBI" id="CHEBI:15377"/>
        <dbReference type="ChEBI" id="CHEBI:30089"/>
        <dbReference type="ChEBI" id="CHEBI:57609"/>
        <dbReference type="ChEBI" id="CHEBI:58767"/>
        <dbReference type="EC" id="3.5.1.47"/>
    </reaction>
</comment>
<comment type="pathway">
    <text evidence="1">Amino-acid biosynthesis; L-lysine biosynthesis via DAP pathway; LL-2,6-diaminopimelate from (S)-tetrahydrodipicolinate (acetylase route): step 3/3.</text>
</comment>
<comment type="similarity">
    <text evidence="1">Belongs to the peptidase M20A family. N-acetyldiaminopimelate deacetylase subfamily.</text>
</comment>
<evidence type="ECO:0000255" key="1">
    <source>
        <dbReference type="HAMAP-Rule" id="MF_01692"/>
    </source>
</evidence>
<proteinExistence type="inferred from homology"/>
<dbReference type="EC" id="3.5.1.47" evidence="1"/>
<dbReference type="EMBL" id="CP000408">
    <property type="protein sequence ID" value="ABP93203.1"/>
    <property type="molecule type" value="Genomic_DNA"/>
</dbReference>
<dbReference type="SMR" id="A4W4B4"/>
<dbReference type="KEGG" id="ssv:SSU98_2045"/>
<dbReference type="HOGENOM" id="CLU_023257_0_1_9"/>
<dbReference type="BioCyc" id="SSUI391296:GI2E-2103-MONOMER"/>
<dbReference type="UniPathway" id="UPA00034">
    <property type="reaction ID" value="UER00024"/>
</dbReference>
<dbReference type="GO" id="GO:0050118">
    <property type="term" value="F:N-acetyldiaminopimelate deacetylase activity"/>
    <property type="evidence" value="ECO:0007669"/>
    <property type="project" value="UniProtKB-UniRule"/>
</dbReference>
<dbReference type="GO" id="GO:0019877">
    <property type="term" value="P:diaminopimelate biosynthetic process"/>
    <property type="evidence" value="ECO:0007669"/>
    <property type="project" value="UniProtKB-UniRule"/>
</dbReference>
<dbReference type="GO" id="GO:0009089">
    <property type="term" value="P:lysine biosynthetic process via diaminopimelate"/>
    <property type="evidence" value="ECO:0007669"/>
    <property type="project" value="UniProtKB-UniRule"/>
</dbReference>
<dbReference type="CDD" id="cd05670">
    <property type="entry name" value="M20_Acy1_YkuR-like"/>
    <property type="match status" value="1"/>
</dbReference>
<dbReference type="FunFam" id="3.30.70.360:FF:000001">
    <property type="entry name" value="N-acetyldiaminopimelate deacetylase"/>
    <property type="match status" value="1"/>
</dbReference>
<dbReference type="Gene3D" id="3.30.70.360">
    <property type="match status" value="1"/>
</dbReference>
<dbReference type="Gene3D" id="3.40.630.10">
    <property type="entry name" value="Zn peptidases"/>
    <property type="match status" value="1"/>
</dbReference>
<dbReference type="HAMAP" id="MF_01692">
    <property type="entry name" value="DapEL"/>
    <property type="match status" value="1"/>
</dbReference>
<dbReference type="InterPro" id="IPR023905">
    <property type="entry name" value="AcetylDAP_deacetylase"/>
</dbReference>
<dbReference type="InterPro" id="IPR017439">
    <property type="entry name" value="Amidohydrolase"/>
</dbReference>
<dbReference type="InterPro" id="IPR036264">
    <property type="entry name" value="Bact_exopeptidase_dim_dom"/>
</dbReference>
<dbReference type="InterPro" id="IPR002933">
    <property type="entry name" value="Peptidase_M20"/>
</dbReference>
<dbReference type="InterPro" id="IPR011650">
    <property type="entry name" value="Peptidase_M20_dimer"/>
</dbReference>
<dbReference type="NCBIfam" id="TIGR01891">
    <property type="entry name" value="amidohydrolases"/>
    <property type="match status" value="1"/>
</dbReference>
<dbReference type="PANTHER" id="PTHR11014:SF98">
    <property type="entry name" value="N-ACETYLDIAMINOPIMELATE DEACETYLASE"/>
    <property type="match status" value="1"/>
</dbReference>
<dbReference type="PANTHER" id="PTHR11014">
    <property type="entry name" value="PEPTIDASE M20 FAMILY MEMBER"/>
    <property type="match status" value="1"/>
</dbReference>
<dbReference type="Pfam" id="PF07687">
    <property type="entry name" value="M20_dimer"/>
    <property type="match status" value="1"/>
</dbReference>
<dbReference type="Pfam" id="PF01546">
    <property type="entry name" value="Peptidase_M20"/>
    <property type="match status" value="1"/>
</dbReference>
<dbReference type="PIRSF" id="PIRSF005962">
    <property type="entry name" value="Pept_M20D_amidohydro"/>
    <property type="match status" value="1"/>
</dbReference>
<dbReference type="SUPFAM" id="SSF55031">
    <property type="entry name" value="Bacterial exopeptidase dimerisation domain"/>
    <property type="match status" value="1"/>
</dbReference>
<dbReference type="SUPFAM" id="SSF53187">
    <property type="entry name" value="Zn-dependent exopeptidases"/>
    <property type="match status" value="1"/>
</dbReference>
<protein>
    <recommendedName>
        <fullName evidence="1">N-acetyldiaminopimelate deacetylase</fullName>
        <ecNumber evidence="1">3.5.1.47</ecNumber>
    </recommendedName>
</protein>
<feature type="chain" id="PRO_0000376791" description="N-acetyldiaminopimelate deacetylase">
    <location>
        <begin position="1"/>
        <end position="375"/>
    </location>
</feature>
<feature type="active site" evidence="1">
    <location>
        <position position="69"/>
    </location>
</feature>
<feature type="active site" description="Proton acceptor" evidence="1">
    <location>
        <position position="128"/>
    </location>
</feature>
<reference key="1">
    <citation type="journal article" date="2007" name="PLoS ONE">
        <title>A glimpse of streptococcal toxic shock syndrome from comparative genomics of S. suis 2 Chinese isolates.</title>
        <authorList>
            <person name="Chen C."/>
            <person name="Tang J."/>
            <person name="Dong W."/>
            <person name="Wang C."/>
            <person name="Feng Y."/>
            <person name="Wang J."/>
            <person name="Zheng F."/>
            <person name="Pan X."/>
            <person name="Liu D."/>
            <person name="Li M."/>
            <person name="Song Y."/>
            <person name="Zhu X."/>
            <person name="Sun H."/>
            <person name="Feng T."/>
            <person name="Guo Z."/>
            <person name="Ju A."/>
            <person name="Ge J."/>
            <person name="Dong Y."/>
            <person name="Sun W."/>
            <person name="Jiang Y."/>
            <person name="Wang J."/>
            <person name="Yan J."/>
            <person name="Yang H."/>
            <person name="Wang X."/>
            <person name="Gao G.F."/>
            <person name="Yang R."/>
            <person name="Wang J."/>
            <person name="Yu J."/>
        </authorList>
    </citation>
    <scope>NUCLEOTIDE SEQUENCE [LARGE SCALE GENOMIC DNA]</scope>
    <source>
        <strain>98HAH33</strain>
    </source>
</reference>
<gene>
    <name type="ordered locus">SSU98_2045</name>
</gene>
<sequence length="375" mass="41412">MLDLIATRRALHQIPELGMEEFKTHAFLMETIEGLLQDCSFAQVRTWKTGILVYLTGSAPEKTIGWRADIDGLPIVEETGLDFKSLHPDRMHACGHDFHMTIALGLLEKMAEQQPRNNLLFLFQPAEENLAGGMLMYEAGAFGDWLPDEFYGLHVRPDLKVGQMATNRATLFAGTCEVKIRFTGKGGHAAFPYTANDALVAASYFVTQVQSVVSRNVDPIEGAVVTFGSMHAGTTNNVIAETAFLHGTIRALTQNMSLLVQKRVREVAEGIALSFGVDLEIELNPSGYLPVENNPQLADELMTYFDGIDGVEMIDCPPAMTGEDFGYLLNKVPGVMFWLGVDTPYPLHNPRLSPKEEVLPFAVDKLSDFLKMKAN</sequence>
<keyword id="KW-0028">Amino-acid biosynthesis</keyword>
<keyword id="KW-0220">Diaminopimelate biosynthesis</keyword>
<keyword id="KW-0378">Hydrolase</keyword>
<keyword id="KW-0457">Lysine biosynthesis</keyword>
<organism>
    <name type="scientific">Streptococcus suis (strain 98HAH33)</name>
    <dbReference type="NCBI Taxonomy" id="391296"/>
    <lineage>
        <taxon>Bacteria</taxon>
        <taxon>Bacillati</taxon>
        <taxon>Bacillota</taxon>
        <taxon>Bacilli</taxon>
        <taxon>Lactobacillales</taxon>
        <taxon>Streptococcaceae</taxon>
        <taxon>Streptococcus</taxon>
    </lineage>
</organism>
<name>DAPEL_STRS2</name>
<accession>A4W4B4</accession>